<keyword id="KW-0378">Hydrolase</keyword>
<keyword id="KW-0479">Metal-binding</keyword>
<keyword id="KW-1185">Reference proteome</keyword>
<keyword id="KW-0862">Zinc</keyword>
<reference key="1">
    <citation type="journal article" date="2010" name="Stand. Genomic Sci.">
        <title>Complete genome sequence of Segniliparus rotundus type strain (CDC 1076).</title>
        <authorList>
            <person name="Sikorski J."/>
            <person name="Lapidus A."/>
            <person name="Copeland A."/>
            <person name="Misra M."/>
            <person name="Glavina Del Rio T."/>
            <person name="Nolan M."/>
            <person name="Lucas S."/>
            <person name="Chen F."/>
            <person name="Tice H."/>
            <person name="Cheng J.F."/>
            <person name="Jando M."/>
            <person name="Schneider S."/>
            <person name="Bruce D."/>
            <person name="Goodwin L."/>
            <person name="Pitluck S."/>
            <person name="Liolios K."/>
            <person name="Mikhailova N."/>
            <person name="Pati A."/>
            <person name="Ivanova N."/>
            <person name="Mavromatis K."/>
            <person name="Chen A."/>
            <person name="Palaniappan K."/>
            <person name="Chertkov O."/>
            <person name="Land M."/>
            <person name="Hauser L."/>
            <person name="Chang Y.J."/>
            <person name="Jeffries C.D."/>
            <person name="Brettin T."/>
            <person name="Detter J.C."/>
            <person name="Han C."/>
            <person name="Rohde M."/>
            <person name="Goker M."/>
            <person name="Bristow J."/>
            <person name="Eisen J.A."/>
            <person name="Markowitz V."/>
            <person name="Hugenholtz P."/>
            <person name="Kyrpides N.C."/>
            <person name="Klenk H.P."/>
        </authorList>
    </citation>
    <scope>NUCLEOTIDE SEQUENCE [LARGE SCALE GENOMIC DNA]</scope>
    <source>
        <strain>ATCC BAA-972 / CDC 1076 / CIP 108378 / DSM 44985 / JCM 13578</strain>
    </source>
</reference>
<reference key="2">
    <citation type="submission" date="2010-02" db="EMBL/GenBank/DDBJ databases">
        <title>The complete genome of Segniliparus rotundus DSM 44985.</title>
        <authorList>
            <person name="Lucas S."/>
            <person name="Copeland A."/>
            <person name="Lapidus A."/>
            <person name="Glavina del Rio T."/>
            <person name="Dalin E."/>
            <person name="Tice H."/>
            <person name="Bruce D."/>
            <person name="Goodwin L."/>
            <person name="Pitluck S."/>
            <person name="Kyrpides N."/>
            <person name="Mavromatis K."/>
            <person name="Ivanova N."/>
            <person name="Mikhailova N."/>
            <person name="Misra M."/>
            <person name="Chertkov O."/>
            <person name="Brettin T."/>
            <person name="Detter J.C."/>
            <person name="Han C."/>
            <person name="Larimer F."/>
            <person name="Land M."/>
            <person name="Hauser L."/>
            <person name="Markowitz V."/>
            <person name="Cheng J.-F."/>
            <person name="Hugenholtz P."/>
            <person name="Woyke T."/>
            <person name="Wu D."/>
            <person name="Jando M."/>
            <person name="Schneider S."/>
            <person name="Klenk H.-P."/>
            <person name="Eisen J.A."/>
        </authorList>
    </citation>
    <scope>NUCLEOTIDE SEQUENCE [LARGE SCALE GENOMIC DNA]</scope>
</reference>
<sequence>MNDNDSPRALFVFAHPDDETILSGGTMARLAAEGAHVSLLTCTLGEEGEVIAPELRELAADRADQLGGWRIAELRSALDRLGSPRGARISQHWLAGPGRWRDSGMAAGRNTHPRAFIGGDFGEQARAAAKTIREVRPHVVVTHDPEGGYGHRDHIYANRLVVEAVKIAAAETHSEFGAPWQVKKLYWTGIGESAWRRAIKELGRRAIPDGFELVHADVAKPRRDEEITTVVDIGDYRAAKLAALAAHATQITVCHELAAFALSNKALTPVPAEEHFLLVPLRFGAVDNQDLDNRNPNSQPPADQAREDHLLTGLGFA</sequence>
<evidence type="ECO:0000255" key="1">
    <source>
        <dbReference type="HAMAP-Rule" id="MF_01696"/>
    </source>
</evidence>
<evidence type="ECO:0000256" key="2">
    <source>
        <dbReference type="SAM" id="MobiDB-lite"/>
    </source>
</evidence>
<feature type="chain" id="PRO_0000400222" description="1D-myo-inositol 2-acetamido-2-deoxy-alpha-D-glucopyranoside deacetylase">
    <location>
        <begin position="1"/>
        <end position="317"/>
    </location>
</feature>
<feature type="region of interest" description="Disordered" evidence="2">
    <location>
        <begin position="289"/>
        <end position="317"/>
    </location>
</feature>
<feature type="binding site" evidence="1">
    <location>
        <position position="15"/>
    </location>
    <ligand>
        <name>Zn(2+)</name>
        <dbReference type="ChEBI" id="CHEBI:29105"/>
    </ligand>
</feature>
<feature type="binding site" evidence="1">
    <location>
        <position position="18"/>
    </location>
    <ligand>
        <name>Zn(2+)</name>
        <dbReference type="ChEBI" id="CHEBI:29105"/>
    </ligand>
</feature>
<feature type="binding site" evidence="1">
    <location>
        <position position="154"/>
    </location>
    <ligand>
        <name>Zn(2+)</name>
        <dbReference type="ChEBI" id="CHEBI:29105"/>
    </ligand>
</feature>
<name>MSHB_SEGRD</name>
<organism>
    <name type="scientific">Segniliparus rotundus (strain ATCC BAA-972 / CDC 1076 / CIP 108378 / DSM 44985 / JCM 13578)</name>
    <dbReference type="NCBI Taxonomy" id="640132"/>
    <lineage>
        <taxon>Bacteria</taxon>
        <taxon>Bacillati</taxon>
        <taxon>Actinomycetota</taxon>
        <taxon>Actinomycetes</taxon>
        <taxon>Mycobacteriales</taxon>
        <taxon>Segniliparaceae</taxon>
        <taxon>Segniliparus</taxon>
    </lineage>
</organism>
<comment type="function">
    <text evidence="1">Catalyzes the deacetylation of 1D-myo-inositol 2-acetamido-2-deoxy-alpha-D-glucopyranoside (GlcNAc-Ins) in the mycothiol biosynthesis pathway.</text>
</comment>
<comment type="catalytic activity">
    <reaction evidence="1">
        <text>1D-myo-inositol 2-acetamido-2-deoxy-alpha-D-glucopyranoside + H2O = 1D-myo-inositol 2-amino-2-deoxy-alpha-D-glucopyranoside + acetate</text>
        <dbReference type="Rhea" id="RHEA:26180"/>
        <dbReference type="ChEBI" id="CHEBI:15377"/>
        <dbReference type="ChEBI" id="CHEBI:30089"/>
        <dbReference type="ChEBI" id="CHEBI:52442"/>
        <dbReference type="ChEBI" id="CHEBI:58886"/>
        <dbReference type="EC" id="3.5.1.103"/>
    </reaction>
</comment>
<comment type="cofactor">
    <cofactor evidence="1">
        <name>Zn(2+)</name>
        <dbReference type="ChEBI" id="CHEBI:29105"/>
    </cofactor>
    <text evidence="1">Binds 1 zinc ion per subunit.</text>
</comment>
<comment type="similarity">
    <text evidence="1">Belongs to the MshB deacetylase family.</text>
</comment>
<protein>
    <recommendedName>
        <fullName evidence="1">1D-myo-inositol 2-acetamido-2-deoxy-alpha-D-glucopyranoside deacetylase</fullName>
        <shortName evidence="1">GlcNAc-Ins deacetylase</shortName>
        <ecNumber evidence="1">3.5.1.103</ecNumber>
    </recommendedName>
    <alternativeName>
        <fullName>N-acetyl-1-D-myo-inositol 2-amino-2-deoxy-alpha-D-glucopyranoside deacetylase</fullName>
    </alternativeName>
</protein>
<accession>D6ZE32</accession>
<proteinExistence type="inferred from homology"/>
<gene>
    <name evidence="1" type="primary">mshB</name>
    <name type="ordered locus">Srot_0833</name>
</gene>
<dbReference type="EC" id="3.5.1.103" evidence="1"/>
<dbReference type="EMBL" id="CP001958">
    <property type="protein sequence ID" value="ADG97312.1"/>
    <property type="molecule type" value="Genomic_DNA"/>
</dbReference>
<dbReference type="RefSeq" id="WP_013137768.1">
    <property type="nucleotide sequence ID" value="NC_014168.1"/>
</dbReference>
<dbReference type="SMR" id="D6ZE32"/>
<dbReference type="STRING" id="640132.Srot_0833"/>
<dbReference type="KEGG" id="srt:Srot_0833"/>
<dbReference type="eggNOG" id="COG2120">
    <property type="taxonomic scope" value="Bacteria"/>
</dbReference>
<dbReference type="HOGENOM" id="CLU_049311_2_1_11"/>
<dbReference type="OrthoDB" id="158614at2"/>
<dbReference type="Proteomes" id="UP000002247">
    <property type="component" value="Chromosome"/>
</dbReference>
<dbReference type="GO" id="GO:0035595">
    <property type="term" value="F:N-acetylglucosaminylinositol deacetylase activity"/>
    <property type="evidence" value="ECO:0007669"/>
    <property type="project" value="UniProtKB-EC"/>
</dbReference>
<dbReference type="GO" id="GO:0008270">
    <property type="term" value="F:zinc ion binding"/>
    <property type="evidence" value="ECO:0007669"/>
    <property type="project" value="UniProtKB-UniRule"/>
</dbReference>
<dbReference type="GO" id="GO:0010125">
    <property type="term" value="P:mycothiol biosynthetic process"/>
    <property type="evidence" value="ECO:0007669"/>
    <property type="project" value="UniProtKB-UniRule"/>
</dbReference>
<dbReference type="Gene3D" id="3.40.50.10320">
    <property type="entry name" value="LmbE-like"/>
    <property type="match status" value="1"/>
</dbReference>
<dbReference type="HAMAP" id="MF_01696">
    <property type="entry name" value="MshB"/>
    <property type="match status" value="1"/>
</dbReference>
<dbReference type="InterPro" id="IPR003737">
    <property type="entry name" value="GlcNAc_PI_deacetylase-related"/>
</dbReference>
<dbReference type="InterPro" id="IPR024078">
    <property type="entry name" value="LmbE-like_dom_sf"/>
</dbReference>
<dbReference type="InterPro" id="IPR017810">
    <property type="entry name" value="Mycothiol_biosynthesis_MshB"/>
</dbReference>
<dbReference type="NCBIfam" id="TIGR03445">
    <property type="entry name" value="mycothiol_MshB"/>
    <property type="match status" value="1"/>
</dbReference>
<dbReference type="PANTHER" id="PTHR12993:SF26">
    <property type="entry name" value="1D-MYO-INOSITOL 2-ACETAMIDO-2-DEOXY-ALPHA-D-GLUCOPYRANOSIDE DEACETYLASE"/>
    <property type="match status" value="1"/>
</dbReference>
<dbReference type="PANTHER" id="PTHR12993">
    <property type="entry name" value="N-ACETYLGLUCOSAMINYL-PHOSPHATIDYLINOSITOL DE-N-ACETYLASE-RELATED"/>
    <property type="match status" value="1"/>
</dbReference>
<dbReference type="Pfam" id="PF02585">
    <property type="entry name" value="PIG-L"/>
    <property type="match status" value="1"/>
</dbReference>
<dbReference type="SUPFAM" id="SSF102588">
    <property type="entry name" value="LmbE-like"/>
    <property type="match status" value="1"/>
</dbReference>